<dbReference type="EC" id="4.3.2.1" evidence="1"/>
<dbReference type="EMBL" id="CP000911">
    <property type="protein sequence ID" value="ABY38837.1"/>
    <property type="molecule type" value="Genomic_DNA"/>
</dbReference>
<dbReference type="RefSeq" id="WP_004687711.1">
    <property type="nucleotide sequence ID" value="NC_010169.1"/>
</dbReference>
<dbReference type="SMR" id="B0CIY4"/>
<dbReference type="GeneID" id="97534742"/>
<dbReference type="KEGG" id="bmt:BSUIS_A1821"/>
<dbReference type="HOGENOM" id="CLU_027272_2_3_5"/>
<dbReference type="UniPathway" id="UPA00068">
    <property type="reaction ID" value="UER00114"/>
</dbReference>
<dbReference type="Proteomes" id="UP000008545">
    <property type="component" value="Chromosome I"/>
</dbReference>
<dbReference type="GO" id="GO:0005829">
    <property type="term" value="C:cytosol"/>
    <property type="evidence" value="ECO:0007669"/>
    <property type="project" value="TreeGrafter"/>
</dbReference>
<dbReference type="GO" id="GO:0004056">
    <property type="term" value="F:argininosuccinate lyase activity"/>
    <property type="evidence" value="ECO:0007669"/>
    <property type="project" value="UniProtKB-UniRule"/>
</dbReference>
<dbReference type="GO" id="GO:0042450">
    <property type="term" value="P:arginine biosynthetic process via ornithine"/>
    <property type="evidence" value="ECO:0007669"/>
    <property type="project" value="InterPro"/>
</dbReference>
<dbReference type="GO" id="GO:0006526">
    <property type="term" value="P:L-arginine biosynthetic process"/>
    <property type="evidence" value="ECO:0007669"/>
    <property type="project" value="UniProtKB-UniRule"/>
</dbReference>
<dbReference type="CDD" id="cd01359">
    <property type="entry name" value="Argininosuccinate_lyase"/>
    <property type="match status" value="1"/>
</dbReference>
<dbReference type="FunFam" id="1.10.275.10:FF:000002">
    <property type="entry name" value="Argininosuccinate lyase"/>
    <property type="match status" value="1"/>
</dbReference>
<dbReference type="FunFam" id="1.10.40.30:FF:000001">
    <property type="entry name" value="Argininosuccinate lyase"/>
    <property type="match status" value="1"/>
</dbReference>
<dbReference type="FunFam" id="1.20.200.10:FF:000015">
    <property type="entry name" value="argininosuccinate lyase isoform X2"/>
    <property type="match status" value="1"/>
</dbReference>
<dbReference type="Gene3D" id="1.10.40.30">
    <property type="entry name" value="Fumarase/aspartase (C-terminal domain)"/>
    <property type="match status" value="1"/>
</dbReference>
<dbReference type="Gene3D" id="1.20.200.10">
    <property type="entry name" value="Fumarase/aspartase (Central domain)"/>
    <property type="match status" value="1"/>
</dbReference>
<dbReference type="Gene3D" id="1.10.275.10">
    <property type="entry name" value="Fumarase/aspartase (N-terminal domain)"/>
    <property type="match status" value="1"/>
</dbReference>
<dbReference type="HAMAP" id="MF_00006">
    <property type="entry name" value="Arg_succ_lyase"/>
    <property type="match status" value="1"/>
</dbReference>
<dbReference type="InterPro" id="IPR029419">
    <property type="entry name" value="Arg_succ_lyase_C"/>
</dbReference>
<dbReference type="InterPro" id="IPR009049">
    <property type="entry name" value="Argininosuccinate_lyase"/>
</dbReference>
<dbReference type="InterPro" id="IPR024083">
    <property type="entry name" value="Fumarase/histidase_N"/>
</dbReference>
<dbReference type="InterPro" id="IPR020557">
    <property type="entry name" value="Fumarate_lyase_CS"/>
</dbReference>
<dbReference type="InterPro" id="IPR000362">
    <property type="entry name" value="Fumarate_lyase_fam"/>
</dbReference>
<dbReference type="InterPro" id="IPR022761">
    <property type="entry name" value="Fumarate_lyase_N"/>
</dbReference>
<dbReference type="InterPro" id="IPR008948">
    <property type="entry name" value="L-Aspartase-like"/>
</dbReference>
<dbReference type="NCBIfam" id="TIGR00838">
    <property type="entry name" value="argH"/>
    <property type="match status" value="1"/>
</dbReference>
<dbReference type="PANTHER" id="PTHR43814">
    <property type="entry name" value="ARGININOSUCCINATE LYASE"/>
    <property type="match status" value="1"/>
</dbReference>
<dbReference type="PANTHER" id="PTHR43814:SF1">
    <property type="entry name" value="ARGININOSUCCINATE LYASE"/>
    <property type="match status" value="1"/>
</dbReference>
<dbReference type="Pfam" id="PF14698">
    <property type="entry name" value="ASL_C2"/>
    <property type="match status" value="1"/>
</dbReference>
<dbReference type="Pfam" id="PF00206">
    <property type="entry name" value="Lyase_1"/>
    <property type="match status" value="1"/>
</dbReference>
<dbReference type="PRINTS" id="PR00145">
    <property type="entry name" value="ARGSUCLYASE"/>
</dbReference>
<dbReference type="PRINTS" id="PR00149">
    <property type="entry name" value="FUMRATELYASE"/>
</dbReference>
<dbReference type="SUPFAM" id="SSF48557">
    <property type="entry name" value="L-aspartase-like"/>
    <property type="match status" value="1"/>
</dbReference>
<dbReference type="PROSITE" id="PS00163">
    <property type="entry name" value="FUMARATE_LYASES"/>
    <property type="match status" value="1"/>
</dbReference>
<feature type="chain" id="PRO_1000073839" description="Argininosuccinate lyase">
    <location>
        <begin position="1"/>
        <end position="466"/>
    </location>
</feature>
<keyword id="KW-0028">Amino-acid biosynthesis</keyword>
<keyword id="KW-0055">Arginine biosynthesis</keyword>
<keyword id="KW-0963">Cytoplasm</keyword>
<keyword id="KW-0456">Lyase</keyword>
<evidence type="ECO:0000255" key="1">
    <source>
        <dbReference type="HAMAP-Rule" id="MF_00006"/>
    </source>
</evidence>
<protein>
    <recommendedName>
        <fullName evidence="1">Argininosuccinate lyase</fullName>
        <shortName evidence="1">ASAL</shortName>
        <ecNumber evidence="1">4.3.2.1</ecNumber>
    </recommendedName>
    <alternativeName>
        <fullName evidence="1">Arginosuccinase</fullName>
    </alternativeName>
</protein>
<organism>
    <name type="scientific">Brucella suis (strain ATCC 23445 / NCTC 10510)</name>
    <dbReference type="NCBI Taxonomy" id="470137"/>
    <lineage>
        <taxon>Bacteria</taxon>
        <taxon>Pseudomonadati</taxon>
        <taxon>Pseudomonadota</taxon>
        <taxon>Alphaproteobacteria</taxon>
        <taxon>Hyphomicrobiales</taxon>
        <taxon>Brucellaceae</taxon>
        <taxon>Brucella/Ochrobactrum group</taxon>
        <taxon>Brucella</taxon>
    </lineage>
</organism>
<accession>B0CIY4</accession>
<reference key="1">
    <citation type="submission" date="2007-12" db="EMBL/GenBank/DDBJ databases">
        <title>Brucella suis ATCC 23445 whole genome shotgun sequencing project.</title>
        <authorList>
            <person name="Setubal J.C."/>
            <person name="Bowns C."/>
            <person name="Boyle S."/>
            <person name="Crasta O.R."/>
            <person name="Czar M.J."/>
            <person name="Dharmanolla C."/>
            <person name="Gillespie J.J."/>
            <person name="Kenyon R.W."/>
            <person name="Lu J."/>
            <person name="Mane S."/>
            <person name="Mohapatra S."/>
            <person name="Nagrani S."/>
            <person name="Purkayastha A."/>
            <person name="Rajasimha H.K."/>
            <person name="Shallom J.M."/>
            <person name="Shallom S."/>
            <person name="Shukla M."/>
            <person name="Snyder E.E."/>
            <person name="Sobral B.W."/>
            <person name="Wattam A.R."/>
            <person name="Will R."/>
            <person name="Williams K."/>
            <person name="Yoo H."/>
            <person name="Bruce D."/>
            <person name="Detter C."/>
            <person name="Munk C."/>
            <person name="Brettin T.S."/>
        </authorList>
    </citation>
    <scope>NUCLEOTIDE SEQUENCE [LARGE SCALE GENOMIC DNA]</scope>
    <source>
        <strain>ATCC 23445 / NCTC 10510</strain>
    </source>
</reference>
<proteinExistence type="inferred from homology"/>
<sequence>MSEQKSSNQMWGGRFASGPDAIMEEINASIGFDRKLYAQDIQGSLAHAAMLAKTGIIAAEDHKQIENGLKTIRKEIEEGKFTFSRKLEDIHMNIEARLAELIGPAAGRLHTARSRNDQVAVDFRLWVKQELEKTAAALKNLIEAFLERAEEHAATVMPGFTHLQTAQPVTFGHHCMAYVEMFGRDLSRVRDAIERMDESPLGAAALAGTGFPIDRHMTAKALGFREPTRNSLDSVSDRDYALEFLSLAAICAGHLSRLAEEIVIWSTPQFNFVRLSDAFSTGSSIMPQKKNPDAAELVRAKTGRINGSLVALLTIMKGLPLAYSKDMQEDKEQVFDAAENLELAIAAMAGMVRDLTVNVAAMKKAAGSGYSTATDLADWLVRTLGLPFREAHHVTGRAVALAESRKVDLAKLSLEELQSINPAITAEVFGYLTVEKSVKSRQSFGGTAPQEVRRQIRYWKKRIAKA</sequence>
<comment type="catalytic activity">
    <reaction evidence="1">
        <text>2-(N(omega)-L-arginino)succinate = fumarate + L-arginine</text>
        <dbReference type="Rhea" id="RHEA:24020"/>
        <dbReference type="ChEBI" id="CHEBI:29806"/>
        <dbReference type="ChEBI" id="CHEBI:32682"/>
        <dbReference type="ChEBI" id="CHEBI:57472"/>
        <dbReference type="EC" id="4.3.2.1"/>
    </reaction>
</comment>
<comment type="pathway">
    <text evidence="1">Amino-acid biosynthesis; L-arginine biosynthesis; L-arginine from L-ornithine and carbamoyl phosphate: step 3/3.</text>
</comment>
<comment type="subcellular location">
    <subcellularLocation>
        <location evidence="1">Cytoplasm</location>
    </subcellularLocation>
</comment>
<comment type="similarity">
    <text evidence="1">Belongs to the lyase 1 family. Argininosuccinate lyase subfamily.</text>
</comment>
<name>ARLY_BRUSI</name>
<gene>
    <name evidence="1" type="primary">argH</name>
    <name type="ordered locus">BSUIS_A1821</name>
</gene>